<accession>O51286</accession>
<comment type="function">
    <text evidence="1">Specifically methylates the N4 position of cytidine in position 1402 (C1402) of 16S rRNA.</text>
</comment>
<comment type="catalytic activity">
    <reaction evidence="1">
        <text>cytidine(1402) in 16S rRNA + S-adenosyl-L-methionine = N(4)-methylcytidine(1402) in 16S rRNA + S-adenosyl-L-homocysteine + H(+)</text>
        <dbReference type="Rhea" id="RHEA:42928"/>
        <dbReference type="Rhea" id="RHEA-COMP:10286"/>
        <dbReference type="Rhea" id="RHEA-COMP:10287"/>
        <dbReference type="ChEBI" id="CHEBI:15378"/>
        <dbReference type="ChEBI" id="CHEBI:57856"/>
        <dbReference type="ChEBI" id="CHEBI:59789"/>
        <dbReference type="ChEBI" id="CHEBI:74506"/>
        <dbReference type="ChEBI" id="CHEBI:82748"/>
        <dbReference type="EC" id="2.1.1.199"/>
    </reaction>
</comment>
<comment type="subcellular location">
    <subcellularLocation>
        <location evidence="1">Cytoplasm</location>
    </subcellularLocation>
</comment>
<comment type="similarity">
    <text evidence="1">Belongs to the methyltransferase superfamily. RsmH family.</text>
</comment>
<keyword id="KW-0963">Cytoplasm</keyword>
<keyword id="KW-0489">Methyltransferase</keyword>
<keyword id="KW-1185">Reference proteome</keyword>
<keyword id="KW-0698">rRNA processing</keyword>
<keyword id="KW-0949">S-adenosyl-L-methionine</keyword>
<keyword id="KW-0808">Transferase</keyword>
<feature type="chain" id="PRO_0000108585" description="Ribosomal RNA small subunit methyltransferase H">
    <location>
        <begin position="1"/>
        <end position="296"/>
    </location>
</feature>
<feature type="binding site" evidence="1">
    <location>
        <begin position="38"/>
        <end position="40"/>
    </location>
    <ligand>
        <name>S-adenosyl-L-methionine</name>
        <dbReference type="ChEBI" id="CHEBI:59789"/>
    </ligand>
</feature>
<feature type="binding site" evidence="1">
    <location>
        <position position="57"/>
    </location>
    <ligand>
        <name>S-adenosyl-L-methionine</name>
        <dbReference type="ChEBI" id="CHEBI:59789"/>
    </ligand>
</feature>
<feature type="binding site" evidence="1">
    <location>
        <position position="80"/>
    </location>
    <ligand>
        <name>S-adenosyl-L-methionine</name>
        <dbReference type="ChEBI" id="CHEBI:59789"/>
    </ligand>
</feature>
<feature type="binding site" evidence="1">
    <location>
        <position position="103"/>
    </location>
    <ligand>
        <name>S-adenosyl-L-methionine</name>
        <dbReference type="ChEBI" id="CHEBI:59789"/>
    </ligand>
</feature>
<feature type="binding site" evidence="1">
    <location>
        <position position="110"/>
    </location>
    <ligand>
        <name>S-adenosyl-L-methionine</name>
        <dbReference type="ChEBI" id="CHEBI:59789"/>
    </ligand>
</feature>
<proteinExistence type="inferred from homology"/>
<protein>
    <recommendedName>
        <fullName evidence="1">Ribosomal RNA small subunit methyltransferase H</fullName>
        <ecNumber evidence="1">2.1.1.199</ecNumber>
    </recommendedName>
    <alternativeName>
        <fullName evidence="1">16S rRNA m(4)C1402 methyltransferase</fullName>
    </alternativeName>
    <alternativeName>
        <fullName evidence="1">rRNA (cytosine-N(4)-)-methyltransferase RsmH</fullName>
    </alternativeName>
</protein>
<organism>
    <name type="scientific">Borreliella burgdorferi (strain ATCC 35210 / DSM 4680 / CIP 102532 / B31)</name>
    <name type="common">Borrelia burgdorferi</name>
    <dbReference type="NCBI Taxonomy" id="224326"/>
    <lineage>
        <taxon>Bacteria</taxon>
        <taxon>Pseudomonadati</taxon>
        <taxon>Spirochaetota</taxon>
        <taxon>Spirochaetia</taxon>
        <taxon>Spirochaetales</taxon>
        <taxon>Borreliaceae</taxon>
        <taxon>Borreliella</taxon>
    </lineage>
</organism>
<name>RSMH_BORBU</name>
<reference key="1">
    <citation type="journal article" date="1997" name="Nature">
        <title>Genomic sequence of a Lyme disease spirochaete, Borrelia burgdorferi.</title>
        <authorList>
            <person name="Fraser C.M."/>
            <person name="Casjens S."/>
            <person name="Huang W.M."/>
            <person name="Sutton G.G."/>
            <person name="Clayton R.A."/>
            <person name="Lathigra R."/>
            <person name="White O."/>
            <person name="Ketchum K.A."/>
            <person name="Dodson R.J."/>
            <person name="Hickey E.K."/>
            <person name="Gwinn M.L."/>
            <person name="Dougherty B.A."/>
            <person name="Tomb J.-F."/>
            <person name="Fleischmann R.D."/>
            <person name="Richardson D.L."/>
            <person name="Peterson J.D."/>
            <person name="Kerlavage A.R."/>
            <person name="Quackenbush J."/>
            <person name="Salzberg S.L."/>
            <person name="Hanson M."/>
            <person name="van Vugt R."/>
            <person name="Palmer N."/>
            <person name="Adams M.D."/>
            <person name="Gocayne J.D."/>
            <person name="Weidman J.F."/>
            <person name="Utterback T.R."/>
            <person name="Watthey L."/>
            <person name="McDonald L.A."/>
            <person name="Artiach P."/>
            <person name="Bowman C."/>
            <person name="Garland S.A."/>
            <person name="Fujii C."/>
            <person name="Cotton M.D."/>
            <person name="Horst K."/>
            <person name="Roberts K.M."/>
            <person name="Hatch B."/>
            <person name="Smith H.O."/>
            <person name="Venter J.C."/>
        </authorList>
    </citation>
    <scope>NUCLEOTIDE SEQUENCE [LARGE SCALE GENOMIC DNA]</scope>
    <source>
        <strain>ATCC 35210 / DSM 4680 / CIP 102532 / B31</strain>
    </source>
</reference>
<dbReference type="EC" id="2.1.1.199" evidence="1"/>
<dbReference type="EMBL" id="AE000783">
    <property type="protein sequence ID" value="AAC66643.1"/>
    <property type="molecule type" value="Genomic_DNA"/>
</dbReference>
<dbReference type="PIR" id="B70138">
    <property type="entry name" value="B70138"/>
</dbReference>
<dbReference type="RefSeq" id="NP_212440.1">
    <property type="nucleotide sequence ID" value="NC_001318.1"/>
</dbReference>
<dbReference type="RefSeq" id="WP_002556905.1">
    <property type="nucleotide sequence ID" value="NC_001318.1"/>
</dbReference>
<dbReference type="SMR" id="O51286"/>
<dbReference type="STRING" id="224326.BB_0306"/>
<dbReference type="PaxDb" id="224326-BB_0306"/>
<dbReference type="EnsemblBacteria" id="AAC66643">
    <property type="protein sequence ID" value="AAC66643"/>
    <property type="gene ID" value="BB_0306"/>
</dbReference>
<dbReference type="KEGG" id="bbu:BB_0306"/>
<dbReference type="PATRIC" id="fig|224326.49.peg.705"/>
<dbReference type="HOGENOM" id="CLU_038422_3_0_12"/>
<dbReference type="OrthoDB" id="9806637at2"/>
<dbReference type="Proteomes" id="UP000001807">
    <property type="component" value="Chromosome"/>
</dbReference>
<dbReference type="GO" id="GO:0005737">
    <property type="term" value="C:cytoplasm"/>
    <property type="evidence" value="ECO:0007669"/>
    <property type="project" value="UniProtKB-SubCell"/>
</dbReference>
<dbReference type="GO" id="GO:0071424">
    <property type="term" value="F:rRNA (cytosine-N4-)-methyltransferase activity"/>
    <property type="evidence" value="ECO:0007669"/>
    <property type="project" value="UniProtKB-UniRule"/>
</dbReference>
<dbReference type="GO" id="GO:0070475">
    <property type="term" value="P:rRNA base methylation"/>
    <property type="evidence" value="ECO:0007669"/>
    <property type="project" value="UniProtKB-UniRule"/>
</dbReference>
<dbReference type="Gene3D" id="1.10.150.170">
    <property type="entry name" value="Putative methyltransferase TM0872, insert domain"/>
    <property type="match status" value="1"/>
</dbReference>
<dbReference type="Gene3D" id="3.40.50.150">
    <property type="entry name" value="Vaccinia Virus protein VP39"/>
    <property type="match status" value="1"/>
</dbReference>
<dbReference type="HAMAP" id="MF_01007">
    <property type="entry name" value="16SrRNA_methyltr_H"/>
    <property type="match status" value="1"/>
</dbReference>
<dbReference type="InterPro" id="IPR002903">
    <property type="entry name" value="RsmH"/>
</dbReference>
<dbReference type="InterPro" id="IPR023397">
    <property type="entry name" value="SAM-dep_MeTrfase_MraW_recog"/>
</dbReference>
<dbReference type="InterPro" id="IPR029063">
    <property type="entry name" value="SAM-dependent_MTases_sf"/>
</dbReference>
<dbReference type="NCBIfam" id="TIGR00006">
    <property type="entry name" value="16S rRNA (cytosine(1402)-N(4))-methyltransferase RsmH"/>
    <property type="match status" value="1"/>
</dbReference>
<dbReference type="PANTHER" id="PTHR11265:SF0">
    <property type="entry name" value="12S RRNA N4-METHYLCYTIDINE METHYLTRANSFERASE"/>
    <property type="match status" value="1"/>
</dbReference>
<dbReference type="PANTHER" id="PTHR11265">
    <property type="entry name" value="S-ADENOSYL-METHYLTRANSFERASE MRAW"/>
    <property type="match status" value="1"/>
</dbReference>
<dbReference type="Pfam" id="PF01795">
    <property type="entry name" value="Methyltransf_5"/>
    <property type="match status" value="1"/>
</dbReference>
<dbReference type="PIRSF" id="PIRSF004486">
    <property type="entry name" value="MraW"/>
    <property type="match status" value="1"/>
</dbReference>
<dbReference type="SUPFAM" id="SSF81799">
    <property type="entry name" value="Putative methyltransferase TM0872, insert domain"/>
    <property type="match status" value="1"/>
</dbReference>
<dbReference type="SUPFAM" id="SSF53335">
    <property type="entry name" value="S-adenosyl-L-methionine-dependent methyltransferases"/>
    <property type="match status" value="1"/>
</dbReference>
<evidence type="ECO:0000255" key="1">
    <source>
        <dbReference type="HAMAP-Rule" id="MF_01007"/>
    </source>
</evidence>
<sequence>MNNNAFHFPVLLDAICKLIEDLPVKSDLIYIDSTLGEGVHAKAILEKYDFLSLVGIERDPQILERARQFLSIFEERITYFNDWFDNFFVNYPLNVKANFILVDLGISMFHYKGSKKGFSFLEDEPLDMRLCSSSCKISAAEIVNTYSKYDLEALIYDLSNEHYSRRISKAIVEYRKIKKIETTKELQSIISKVYPFSKVKINPATKTFQALRIYVNDELARLKRSLPFWVENLAKDGILAIITFHSIEDRIVKDFFRSLSCDLYAKISKKPIMPSFDEIKKNKPSRSAKLRVVKKL</sequence>
<gene>
    <name evidence="1" type="primary">rsmH</name>
    <name type="synonym">mraW</name>
    <name type="ordered locus">BB_0306</name>
</gene>